<comment type="function">
    <text evidence="3">Ubiquitin-binding protein that specifically recognizes and binds 'Lys-63'-linked ubiquitin. Does not bind 'Lys-48'-linked ubiquitin. Positively regulates the internalization of ligand-activated EGFR by binding to the Ub moiety of ubiquitinated EGFR at the cell membrane.</text>
</comment>
<comment type="subunit">
    <text evidence="3">Interacts with EGFR (ubiquitinated); the interaction is direct and may regulate EGFR internalization.</text>
</comment>
<comment type="subcellular location">
    <subcellularLocation>
        <location evidence="3">Cell membrane</location>
    </subcellularLocation>
    <subcellularLocation>
        <location evidence="3">Late endosome</location>
    </subcellularLocation>
    <subcellularLocation>
        <location evidence="3">Early endosome</location>
    </subcellularLocation>
    <text>Interaction with EGFR may enhance association with the cell membrane.</text>
</comment>
<comment type="alternative products">
    <event type="alternative splicing"/>
    <isoform>
        <id>Q86YJ7-1</id>
        <name>1</name>
        <sequence type="displayed"/>
    </isoform>
    <isoform>
        <id>Q86YJ7-2</id>
        <name>2</name>
        <sequence type="described" ref="VSP_019404"/>
    </isoform>
</comment>
<name>AN13B_HUMAN</name>
<gene>
    <name type="primary">ANKRD13B</name>
</gene>
<organism>
    <name type="scientific">Homo sapiens</name>
    <name type="common">Human</name>
    <dbReference type="NCBI Taxonomy" id="9606"/>
    <lineage>
        <taxon>Eukaryota</taxon>
        <taxon>Metazoa</taxon>
        <taxon>Chordata</taxon>
        <taxon>Craniata</taxon>
        <taxon>Vertebrata</taxon>
        <taxon>Euteleostomi</taxon>
        <taxon>Mammalia</taxon>
        <taxon>Eutheria</taxon>
        <taxon>Euarchontoglires</taxon>
        <taxon>Primates</taxon>
        <taxon>Haplorrhini</taxon>
        <taxon>Catarrhini</taxon>
        <taxon>Hominidae</taxon>
        <taxon>Homo</taxon>
    </lineage>
</organism>
<reference key="1">
    <citation type="journal article" date="2004" name="Nat. Genet.">
        <title>Complete sequencing and characterization of 21,243 full-length human cDNAs.</title>
        <authorList>
            <person name="Ota T."/>
            <person name="Suzuki Y."/>
            <person name="Nishikawa T."/>
            <person name="Otsuki T."/>
            <person name="Sugiyama T."/>
            <person name="Irie R."/>
            <person name="Wakamatsu A."/>
            <person name="Hayashi K."/>
            <person name="Sato H."/>
            <person name="Nagai K."/>
            <person name="Kimura K."/>
            <person name="Makita H."/>
            <person name="Sekine M."/>
            <person name="Obayashi M."/>
            <person name="Nishi T."/>
            <person name="Shibahara T."/>
            <person name="Tanaka T."/>
            <person name="Ishii S."/>
            <person name="Yamamoto J."/>
            <person name="Saito K."/>
            <person name="Kawai Y."/>
            <person name="Isono Y."/>
            <person name="Nakamura Y."/>
            <person name="Nagahari K."/>
            <person name="Murakami K."/>
            <person name="Yasuda T."/>
            <person name="Iwayanagi T."/>
            <person name="Wagatsuma M."/>
            <person name="Shiratori A."/>
            <person name="Sudo H."/>
            <person name="Hosoiri T."/>
            <person name="Kaku Y."/>
            <person name="Kodaira H."/>
            <person name="Kondo H."/>
            <person name="Sugawara M."/>
            <person name="Takahashi M."/>
            <person name="Kanda K."/>
            <person name="Yokoi T."/>
            <person name="Furuya T."/>
            <person name="Kikkawa E."/>
            <person name="Omura Y."/>
            <person name="Abe K."/>
            <person name="Kamihara K."/>
            <person name="Katsuta N."/>
            <person name="Sato K."/>
            <person name="Tanikawa M."/>
            <person name="Yamazaki M."/>
            <person name="Ninomiya K."/>
            <person name="Ishibashi T."/>
            <person name="Yamashita H."/>
            <person name="Murakawa K."/>
            <person name="Fujimori K."/>
            <person name="Tanai H."/>
            <person name="Kimata M."/>
            <person name="Watanabe M."/>
            <person name="Hiraoka S."/>
            <person name="Chiba Y."/>
            <person name="Ishida S."/>
            <person name="Ono Y."/>
            <person name="Takiguchi S."/>
            <person name="Watanabe S."/>
            <person name="Yosida M."/>
            <person name="Hotuta T."/>
            <person name="Kusano J."/>
            <person name="Kanehori K."/>
            <person name="Takahashi-Fujii A."/>
            <person name="Hara H."/>
            <person name="Tanase T.-O."/>
            <person name="Nomura Y."/>
            <person name="Togiya S."/>
            <person name="Komai F."/>
            <person name="Hara R."/>
            <person name="Takeuchi K."/>
            <person name="Arita M."/>
            <person name="Imose N."/>
            <person name="Musashino K."/>
            <person name="Yuuki H."/>
            <person name="Oshima A."/>
            <person name="Sasaki N."/>
            <person name="Aotsuka S."/>
            <person name="Yoshikawa Y."/>
            <person name="Matsunawa H."/>
            <person name="Ichihara T."/>
            <person name="Shiohata N."/>
            <person name="Sano S."/>
            <person name="Moriya S."/>
            <person name="Momiyama H."/>
            <person name="Satoh N."/>
            <person name="Takami S."/>
            <person name="Terashima Y."/>
            <person name="Suzuki O."/>
            <person name="Nakagawa S."/>
            <person name="Senoh A."/>
            <person name="Mizoguchi H."/>
            <person name="Goto Y."/>
            <person name="Shimizu F."/>
            <person name="Wakebe H."/>
            <person name="Hishigaki H."/>
            <person name="Watanabe T."/>
            <person name="Sugiyama A."/>
            <person name="Takemoto M."/>
            <person name="Kawakami B."/>
            <person name="Yamazaki M."/>
            <person name="Watanabe K."/>
            <person name="Kumagai A."/>
            <person name="Itakura S."/>
            <person name="Fukuzumi Y."/>
            <person name="Fujimori Y."/>
            <person name="Komiyama M."/>
            <person name="Tashiro H."/>
            <person name="Tanigami A."/>
            <person name="Fujiwara T."/>
            <person name="Ono T."/>
            <person name="Yamada K."/>
            <person name="Fujii Y."/>
            <person name="Ozaki K."/>
            <person name="Hirao M."/>
            <person name="Ohmori Y."/>
            <person name="Kawabata A."/>
            <person name="Hikiji T."/>
            <person name="Kobatake N."/>
            <person name="Inagaki H."/>
            <person name="Ikema Y."/>
            <person name="Okamoto S."/>
            <person name="Okitani R."/>
            <person name="Kawakami T."/>
            <person name="Noguchi S."/>
            <person name="Itoh T."/>
            <person name="Shigeta K."/>
            <person name="Senba T."/>
            <person name="Matsumura K."/>
            <person name="Nakajima Y."/>
            <person name="Mizuno T."/>
            <person name="Morinaga M."/>
            <person name="Sasaki M."/>
            <person name="Togashi T."/>
            <person name="Oyama M."/>
            <person name="Hata H."/>
            <person name="Watanabe M."/>
            <person name="Komatsu T."/>
            <person name="Mizushima-Sugano J."/>
            <person name="Satoh T."/>
            <person name="Shirai Y."/>
            <person name="Takahashi Y."/>
            <person name="Nakagawa K."/>
            <person name="Okumura K."/>
            <person name="Nagase T."/>
            <person name="Nomura N."/>
            <person name="Kikuchi H."/>
            <person name="Masuho Y."/>
            <person name="Yamashita R."/>
            <person name="Nakai K."/>
            <person name="Yada T."/>
            <person name="Nakamura Y."/>
            <person name="Ohara O."/>
            <person name="Isogai T."/>
            <person name="Sugano S."/>
        </authorList>
    </citation>
    <scope>NUCLEOTIDE SEQUENCE [LARGE SCALE MRNA] (ISOFORM 2)</scope>
    <source>
        <tissue>Testis</tissue>
    </source>
</reference>
<reference key="2">
    <citation type="journal article" date="2006" name="Nature">
        <title>DNA sequence of human chromosome 17 and analysis of rearrangement in the human lineage.</title>
        <authorList>
            <person name="Zody M.C."/>
            <person name="Garber M."/>
            <person name="Adams D.J."/>
            <person name="Sharpe T."/>
            <person name="Harrow J."/>
            <person name="Lupski J.R."/>
            <person name="Nicholson C."/>
            <person name="Searle S.M."/>
            <person name="Wilming L."/>
            <person name="Young S.K."/>
            <person name="Abouelleil A."/>
            <person name="Allen N.R."/>
            <person name="Bi W."/>
            <person name="Bloom T."/>
            <person name="Borowsky M.L."/>
            <person name="Bugalter B.E."/>
            <person name="Butler J."/>
            <person name="Chang J.L."/>
            <person name="Chen C.-K."/>
            <person name="Cook A."/>
            <person name="Corum B."/>
            <person name="Cuomo C.A."/>
            <person name="de Jong P.J."/>
            <person name="DeCaprio D."/>
            <person name="Dewar K."/>
            <person name="FitzGerald M."/>
            <person name="Gilbert J."/>
            <person name="Gibson R."/>
            <person name="Gnerre S."/>
            <person name="Goldstein S."/>
            <person name="Grafham D.V."/>
            <person name="Grocock R."/>
            <person name="Hafez N."/>
            <person name="Hagopian D.S."/>
            <person name="Hart E."/>
            <person name="Norman C.H."/>
            <person name="Humphray S."/>
            <person name="Jaffe D.B."/>
            <person name="Jones M."/>
            <person name="Kamal M."/>
            <person name="Khodiyar V.K."/>
            <person name="LaButti K."/>
            <person name="Laird G."/>
            <person name="Lehoczky J."/>
            <person name="Liu X."/>
            <person name="Lokyitsang T."/>
            <person name="Loveland J."/>
            <person name="Lui A."/>
            <person name="Macdonald P."/>
            <person name="Major J.E."/>
            <person name="Matthews L."/>
            <person name="Mauceli E."/>
            <person name="McCarroll S.A."/>
            <person name="Mihalev A.H."/>
            <person name="Mudge J."/>
            <person name="Nguyen C."/>
            <person name="Nicol R."/>
            <person name="O'Leary S.B."/>
            <person name="Osoegawa K."/>
            <person name="Schwartz D.C."/>
            <person name="Shaw-Smith C."/>
            <person name="Stankiewicz P."/>
            <person name="Steward C."/>
            <person name="Swarbreck D."/>
            <person name="Venkataraman V."/>
            <person name="Whittaker C.A."/>
            <person name="Yang X."/>
            <person name="Zimmer A.R."/>
            <person name="Bradley A."/>
            <person name="Hubbard T."/>
            <person name="Birren B.W."/>
            <person name="Rogers J."/>
            <person name="Lander E.S."/>
            <person name="Nusbaum C."/>
        </authorList>
    </citation>
    <scope>NUCLEOTIDE SEQUENCE [LARGE SCALE GENOMIC DNA]</scope>
</reference>
<reference key="3">
    <citation type="journal article" date="2004" name="Genome Res.">
        <title>The status, quality, and expansion of the NIH full-length cDNA project: the Mammalian Gene Collection (MGC).</title>
        <authorList>
            <consortium name="The MGC Project Team"/>
        </authorList>
    </citation>
    <scope>NUCLEOTIDE SEQUENCE [LARGE SCALE MRNA] (ISOFORM 1)</scope>
    <source>
        <tissue>Skin</tissue>
    </source>
</reference>
<reference key="4">
    <citation type="journal article" date="2012" name="Mol. Biol. Cell">
        <title>The Ankrd 13 family of UIM-bearing proteins regulates EGF receptor endocytosis from the plasma membrane.</title>
        <authorList>
            <person name="Tanno H."/>
            <person name="Yamaguchi T."/>
            <person name="Goto E."/>
            <person name="Ishido S."/>
            <person name="Komada M."/>
        </authorList>
    </citation>
    <scope>FUNCTION</scope>
    <scope>INTERACTION WITH EGFR</scope>
    <scope>UBIQUITIN-BINDING</scope>
    <scope>SUBCELLULAR LOCATION</scope>
</reference>
<reference key="5">
    <citation type="journal article" date="2012" name="Proc. Natl. Acad. Sci. U.S.A.">
        <title>N-terminal acetylome analyses and functional insights of the N-terminal acetyltransferase NatB.</title>
        <authorList>
            <person name="Van Damme P."/>
            <person name="Lasa M."/>
            <person name="Polevoda B."/>
            <person name="Gazquez C."/>
            <person name="Elosegui-Artola A."/>
            <person name="Kim D.S."/>
            <person name="De Juan-Pardo E."/>
            <person name="Demeyer K."/>
            <person name="Hole K."/>
            <person name="Larrea E."/>
            <person name="Timmerman E."/>
            <person name="Prieto J."/>
            <person name="Arnesen T."/>
            <person name="Sherman F."/>
            <person name="Gevaert K."/>
            <person name="Aldabe R."/>
        </authorList>
    </citation>
    <scope>ACETYLATION [LARGE SCALE ANALYSIS] AT MET-1</scope>
    <scope>IDENTIFICATION BY MASS SPECTROMETRY [LARGE SCALE ANALYSIS]</scope>
</reference>
<accession>Q86YJ7</accession>
<accession>Q8N7S9</accession>
<sequence>MIPANASARKGPEGKYPLHYLVWHNRHRELEKEVRAGQVDIEQLDPRGRTPLHLATTLGHLECARVLLAHGADVGRENRSGWTVLQEAVSTRDLELVQLVLRYRDYQRVVKRLAGIPVLLEKLRKAQDFYVEMKWEFTSWVPLVSKICPSDTYKVWKSGQNLRVDTTLLGFDHMTWQRGNRSFVFRGQDTSAVVMEIDHDRRVVYTETLALAGQDRELLLAAAQPTEEQVLSRLTAPVVTTQLDTKNISFERNKTGILGWRSEKTEMVNGYEAKVYGASNVELITRTRTEHLSEQHKGKVKGCKTPLQSFLGIAEQHGGPQNGTLITQTLSQANPTAITAEEYFNPNFELGNRDMGRPMELTTKTQKFKAKLWLCEEHPLSLCEQVAPIIDLMAVSNALFAKLRDFITLRLPPGFPVKIEIPIFHILNARITFGNLNGCDEPVPSVRGSPSSETPSPGSDSSSVSSSSSTTSCRGCEISPALFEAPRGYSMMGGQREAATRDDDDDLLQFAIQQSLLEAGSEYDQVTIWEALTNSKPGTHPMSYEGRRQDRSAPPTPQRQPAPPASVPSPRPSSGPGSGGHVFRSYDEQLRLAMELSAQEQEERRRRARQEEEELERILRLSLTEQ</sequence>
<feature type="chain" id="PRO_0000240643" description="Ankyrin repeat domain-containing protein 13B">
    <location>
        <begin position="1"/>
        <end position="626"/>
    </location>
</feature>
<feature type="repeat" description="ANK 1">
    <location>
        <begin position="47"/>
        <end position="76"/>
    </location>
</feature>
<feature type="repeat" description="ANK 2">
    <location>
        <begin position="80"/>
        <end position="109"/>
    </location>
</feature>
<feature type="domain" description="UIM 1" evidence="1">
    <location>
        <begin position="503"/>
        <end position="522"/>
    </location>
</feature>
<feature type="domain" description="UIM 2" evidence="1">
    <location>
        <begin position="585"/>
        <end position="604"/>
    </location>
</feature>
<feature type="domain" description="UIM 3" evidence="1">
    <location>
        <begin position="610"/>
        <end position="626"/>
    </location>
</feature>
<feature type="region of interest" description="Disordered" evidence="2">
    <location>
        <begin position="442"/>
        <end position="474"/>
    </location>
</feature>
<feature type="region of interest" description="Disordered" evidence="2">
    <location>
        <begin position="534"/>
        <end position="590"/>
    </location>
</feature>
<feature type="region of interest" description="Disordered" evidence="2">
    <location>
        <begin position="595"/>
        <end position="614"/>
    </location>
</feature>
<feature type="compositionally biased region" description="Low complexity" evidence="2">
    <location>
        <begin position="449"/>
        <end position="472"/>
    </location>
</feature>
<feature type="compositionally biased region" description="Pro residues" evidence="2">
    <location>
        <begin position="554"/>
        <end position="573"/>
    </location>
</feature>
<feature type="modified residue" description="N-acetylmethionine" evidence="6">
    <location>
        <position position="1"/>
    </location>
</feature>
<feature type="splice variant" id="VSP_019404" description="In isoform 2." evidence="4">
    <location>
        <begin position="1"/>
        <end position="132"/>
    </location>
</feature>
<feature type="sequence conflict" description="In Ref. 3; AAH32554." evidence="5" ref="3">
    <original>A</original>
    <variation>P</variation>
    <location>
        <position position="126"/>
    </location>
</feature>
<feature type="sequence conflict" description="In Ref. 3; AAH32554." evidence="5" ref="3">
    <original>Q</original>
    <variation>H</variation>
    <location>
        <position position="295"/>
    </location>
</feature>
<feature type="sequence conflict" description="In Ref. 1; BAC05148." evidence="5" ref="1">
    <original>K</original>
    <variation>E</variation>
    <location>
        <position position="304"/>
    </location>
</feature>
<feature type="sequence conflict" description="In Ref. 1; BAC05148." evidence="5" ref="1">
    <original>Q</original>
    <variation>R</variation>
    <location>
        <position position="332"/>
    </location>
</feature>
<keyword id="KW-0007">Acetylation</keyword>
<keyword id="KW-0025">Alternative splicing</keyword>
<keyword id="KW-0040">ANK repeat</keyword>
<keyword id="KW-1003">Cell membrane</keyword>
<keyword id="KW-0967">Endosome</keyword>
<keyword id="KW-0472">Membrane</keyword>
<keyword id="KW-1267">Proteomics identification</keyword>
<keyword id="KW-1185">Reference proteome</keyword>
<keyword id="KW-0677">Repeat</keyword>
<dbReference type="EMBL" id="AK097716">
    <property type="protein sequence ID" value="BAC05148.1"/>
    <property type="molecule type" value="mRNA"/>
</dbReference>
<dbReference type="EMBL" id="AC104564">
    <property type="status" value="NOT_ANNOTATED_CDS"/>
    <property type="molecule type" value="Genomic_DNA"/>
</dbReference>
<dbReference type="EMBL" id="BC032554">
    <property type="protein sequence ID" value="AAH32554.3"/>
    <property type="molecule type" value="mRNA"/>
</dbReference>
<dbReference type="CCDS" id="CCDS11251.1">
    <molecule id="Q86YJ7-1"/>
</dbReference>
<dbReference type="RefSeq" id="NP_689558.4">
    <molecule id="Q86YJ7-1"/>
    <property type="nucleotide sequence ID" value="NM_152345.4"/>
</dbReference>
<dbReference type="SMR" id="Q86YJ7"/>
<dbReference type="BioGRID" id="125900">
    <property type="interactions" value="11"/>
</dbReference>
<dbReference type="FunCoup" id="Q86YJ7">
    <property type="interactions" value="2372"/>
</dbReference>
<dbReference type="IntAct" id="Q86YJ7">
    <property type="interactions" value="6"/>
</dbReference>
<dbReference type="STRING" id="9606.ENSP00000378328"/>
<dbReference type="iPTMnet" id="Q86YJ7"/>
<dbReference type="PhosphoSitePlus" id="Q86YJ7"/>
<dbReference type="BioMuta" id="ANKRD13B"/>
<dbReference type="DMDM" id="269849747"/>
<dbReference type="jPOST" id="Q86YJ7"/>
<dbReference type="MassIVE" id="Q86YJ7"/>
<dbReference type="PaxDb" id="9606-ENSP00000378328"/>
<dbReference type="PeptideAtlas" id="Q86YJ7"/>
<dbReference type="ProteomicsDB" id="70426">
    <molecule id="Q86YJ7-1"/>
</dbReference>
<dbReference type="ProteomicsDB" id="70427">
    <molecule id="Q86YJ7-2"/>
</dbReference>
<dbReference type="Antibodypedia" id="26768">
    <property type="antibodies" value="55 antibodies from 18 providers"/>
</dbReference>
<dbReference type="DNASU" id="124930"/>
<dbReference type="Ensembl" id="ENST00000394859.8">
    <molecule id="Q86YJ7-1"/>
    <property type="protein sequence ID" value="ENSP00000378328.3"/>
    <property type="gene ID" value="ENSG00000198720.13"/>
</dbReference>
<dbReference type="Ensembl" id="ENST00000488766.5">
    <molecule id="Q86YJ7-1"/>
    <property type="protein sequence ID" value="ENSP00000431958.1"/>
    <property type="gene ID" value="ENSG00000198720.13"/>
</dbReference>
<dbReference type="Ensembl" id="ENST00000614878.4">
    <molecule id="Q86YJ7-1"/>
    <property type="protein sequence ID" value="ENSP00000481530.1"/>
    <property type="gene ID" value="ENSG00000198720.13"/>
</dbReference>
<dbReference type="GeneID" id="124930"/>
<dbReference type="KEGG" id="hsa:124930"/>
<dbReference type="MANE-Select" id="ENST00000394859.8">
    <property type="protein sequence ID" value="ENSP00000378328.3"/>
    <property type="RefSeq nucleotide sequence ID" value="NM_152345.5"/>
    <property type="RefSeq protein sequence ID" value="NP_689558.4"/>
</dbReference>
<dbReference type="UCSC" id="uc002hei.4">
    <molecule id="Q86YJ7-1"/>
    <property type="organism name" value="human"/>
</dbReference>
<dbReference type="AGR" id="HGNC:26363"/>
<dbReference type="CTD" id="124930"/>
<dbReference type="DisGeNET" id="124930"/>
<dbReference type="GeneCards" id="ANKRD13B"/>
<dbReference type="HGNC" id="HGNC:26363">
    <property type="gene designation" value="ANKRD13B"/>
</dbReference>
<dbReference type="HPA" id="ENSG00000198720">
    <property type="expression patterns" value="Tissue enhanced (brain)"/>
</dbReference>
<dbReference type="MIM" id="615124">
    <property type="type" value="gene"/>
</dbReference>
<dbReference type="neXtProt" id="NX_Q86YJ7"/>
<dbReference type="OpenTargets" id="ENSG00000198720"/>
<dbReference type="PharmGKB" id="PA142672616"/>
<dbReference type="VEuPathDB" id="HostDB:ENSG00000198720"/>
<dbReference type="eggNOG" id="KOG0522">
    <property type="taxonomic scope" value="Eukaryota"/>
</dbReference>
<dbReference type="GeneTree" id="ENSGT00950000182928"/>
<dbReference type="HOGENOM" id="CLU_026137_2_0_1"/>
<dbReference type="InParanoid" id="Q86YJ7"/>
<dbReference type="OMA" id="NYPLHWL"/>
<dbReference type="OrthoDB" id="1585644at2759"/>
<dbReference type="PAN-GO" id="Q86YJ7">
    <property type="GO annotations" value="1 GO annotation based on evolutionary models"/>
</dbReference>
<dbReference type="PhylomeDB" id="Q86YJ7"/>
<dbReference type="TreeFam" id="TF314176"/>
<dbReference type="PathwayCommons" id="Q86YJ7"/>
<dbReference type="SignaLink" id="Q86YJ7"/>
<dbReference type="BioGRID-ORCS" id="124930">
    <property type="hits" value="20 hits in 1155 CRISPR screens"/>
</dbReference>
<dbReference type="GenomeRNAi" id="124930"/>
<dbReference type="Pharos" id="Q86YJ7">
    <property type="development level" value="Tdark"/>
</dbReference>
<dbReference type="PRO" id="PR:Q86YJ7"/>
<dbReference type="Proteomes" id="UP000005640">
    <property type="component" value="Chromosome 17"/>
</dbReference>
<dbReference type="RNAct" id="Q86YJ7">
    <property type="molecule type" value="protein"/>
</dbReference>
<dbReference type="Bgee" id="ENSG00000198720">
    <property type="expression patterns" value="Expressed in right hemisphere of cerebellum and 159 other cell types or tissues"/>
</dbReference>
<dbReference type="ExpressionAtlas" id="Q86YJ7">
    <property type="expression patterns" value="baseline and differential"/>
</dbReference>
<dbReference type="GO" id="GO:0005737">
    <property type="term" value="C:cytoplasm"/>
    <property type="evidence" value="ECO:0000314"/>
    <property type="project" value="UniProtKB"/>
</dbReference>
<dbReference type="GO" id="GO:0005769">
    <property type="term" value="C:early endosome"/>
    <property type="evidence" value="ECO:0000314"/>
    <property type="project" value="UniProtKB"/>
</dbReference>
<dbReference type="GO" id="GO:0043231">
    <property type="term" value="C:intracellular membrane-bounded organelle"/>
    <property type="evidence" value="ECO:0000314"/>
    <property type="project" value="HPA"/>
</dbReference>
<dbReference type="GO" id="GO:0005770">
    <property type="term" value="C:late endosome"/>
    <property type="evidence" value="ECO:0000314"/>
    <property type="project" value="UniProtKB"/>
</dbReference>
<dbReference type="GO" id="GO:0048471">
    <property type="term" value="C:perinuclear region of cytoplasm"/>
    <property type="evidence" value="ECO:0000314"/>
    <property type="project" value="UniProtKB"/>
</dbReference>
<dbReference type="GO" id="GO:0005886">
    <property type="term" value="C:plasma membrane"/>
    <property type="evidence" value="ECO:0000314"/>
    <property type="project" value="HPA"/>
</dbReference>
<dbReference type="GO" id="GO:0140036">
    <property type="term" value="F:ubiquitin-modified protein reader activity"/>
    <property type="evidence" value="ECO:0000314"/>
    <property type="project" value="UniProtKB"/>
</dbReference>
<dbReference type="GO" id="GO:0002091">
    <property type="term" value="P:negative regulation of receptor internalization"/>
    <property type="evidence" value="ECO:0000315"/>
    <property type="project" value="UniProtKB"/>
</dbReference>
<dbReference type="FunFam" id="1.25.40.20:FF:000057">
    <property type="entry name" value="Ankyrin repeat domain-containing protein 13B"/>
    <property type="match status" value="1"/>
</dbReference>
<dbReference type="Gene3D" id="1.25.40.20">
    <property type="entry name" value="Ankyrin repeat-containing domain"/>
    <property type="match status" value="1"/>
</dbReference>
<dbReference type="InterPro" id="IPR021832">
    <property type="entry name" value="ANKRD13"/>
</dbReference>
<dbReference type="InterPro" id="IPR055285">
    <property type="entry name" value="ANKRD13_C"/>
</dbReference>
<dbReference type="InterPro" id="IPR002110">
    <property type="entry name" value="Ankyrin_rpt"/>
</dbReference>
<dbReference type="InterPro" id="IPR036770">
    <property type="entry name" value="Ankyrin_rpt-contain_sf"/>
</dbReference>
<dbReference type="InterPro" id="IPR003903">
    <property type="entry name" value="UIM_dom"/>
</dbReference>
<dbReference type="PANTHER" id="PTHR12447">
    <property type="entry name" value="ANKYRIN REPEAT DOMAIN-CONTAINING PROTEIN 13"/>
    <property type="match status" value="1"/>
</dbReference>
<dbReference type="PANTHER" id="PTHR12447:SF3">
    <property type="entry name" value="ANKYRIN REPEAT DOMAIN-CONTAINING PROTEIN 13B"/>
    <property type="match status" value="1"/>
</dbReference>
<dbReference type="Pfam" id="PF12796">
    <property type="entry name" value="Ank_2"/>
    <property type="match status" value="1"/>
</dbReference>
<dbReference type="Pfam" id="PF11904">
    <property type="entry name" value="ANKRD13_C"/>
    <property type="match status" value="1"/>
</dbReference>
<dbReference type="SMART" id="SM00248">
    <property type="entry name" value="ANK"/>
    <property type="match status" value="3"/>
</dbReference>
<dbReference type="SMART" id="SM00726">
    <property type="entry name" value="UIM"/>
    <property type="match status" value="2"/>
</dbReference>
<dbReference type="SUPFAM" id="SSF48403">
    <property type="entry name" value="Ankyrin repeat"/>
    <property type="match status" value="1"/>
</dbReference>
<dbReference type="PROSITE" id="PS50297">
    <property type="entry name" value="ANK_REP_REGION"/>
    <property type="match status" value="1"/>
</dbReference>
<dbReference type="PROSITE" id="PS50088">
    <property type="entry name" value="ANK_REPEAT"/>
    <property type="match status" value="1"/>
</dbReference>
<dbReference type="PROSITE" id="PS50330">
    <property type="entry name" value="UIM"/>
    <property type="match status" value="2"/>
</dbReference>
<evidence type="ECO:0000255" key="1">
    <source>
        <dbReference type="PROSITE-ProRule" id="PRU00213"/>
    </source>
</evidence>
<evidence type="ECO:0000256" key="2">
    <source>
        <dbReference type="SAM" id="MobiDB-lite"/>
    </source>
</evidence>
<evidence type="ECO:0000269" key="3">
    <source>
    </source>
</evidence>
<evidence type="ECO:0000303" key="4">
    <source>
    </source>
</evidence>
<evidence type="ECO:0000305" key="5"/>
<evidence type="ECO:0007744" key="6">
    <source>
    </source>
</evidence>
<proteinExistence type="evidence at protein level"/>
<protein>
    <recommendedName>
        <fullName>Ankyrin repeat domain-containing protein 13B</fullName>
    </recommendedName>
</protein>